<sequence>MIPGELVIDDGEHTLNAGRHTIALVVANTGDRPVQVGSHYHFHEVNDALSFDRAAARGFRLNIAAGTAVRFEPGQTRTVELVELGGARAVYGFQGKVMGPL</sequence>
<evidence type="ECO:0000255" key="1">
    <source>
        <dbReference type="HAMAP-Rule" id="MF_01954"/>
    </source>
</evidence>
<evidence type="ECO:0000305" key="2"/>
<dbReference type="EC" id="3.5.1.5" evidence="1"/>
<dbReference type="EMBL" id="CP000124">
    <property type="protein sequence ID" value="ABA49453.1"/>
    <property type="status" value="ALT_INIT"/>
    <property type="molecule type" value="Genomic_DNA"/>
</dbReference>
<dbReference type="RefSeq" id="WP_004186466.1">
    <property type="nucleotide sequence ID" value="NC_007434.1"/>
</dbReference>
<dbReference type="SMR" id="Q3JPJ7"/>
<dbReference type="EnsemblBacteria" id="ABA49453">
    <property type="protein sequence ID" value="ABA49453"/>
    <property type="gene ID" value="BURPS1710b_3134"/>
</dbReference>
<dbReference type="KEGG" id="bpm:BURPS1710b_3134"/>
<dbReference type="HOGENOM" id="CLU_129707_1_0_4"/>
<dbReference type="UniPathway" id="UPA00258">
    <property type="reaction ID" value="UER00370"/>
</dbReference>
<dbReference type="Proteomes" id="UP000002700">
    <property type="component" value="Chromosome I"/>
</dbReference>
<dbReference type="GO" id="GO:0035550">
    <property type="term" value="C:urease complex"/>
    <property type="evidence" value="ECO:0007669"/>
    <property type="project" value="InterPro"/>
</dbReference>
<dbReference type="GO" id="GO:0009039">
    <property type="term" value="F:urease activity"/>
    <property type="evidence" value="ECO:0007669"/>
    <property type="project" value="UniProtKB-UniRule"/>
</dbReference>
<dbReference type="GO" id="GO:0043419">
    <property type="term" value="P:urea catabolic process"/>
    <property type="evidence" value="ECO:0007669"/>
    <property type="project" value="UniProtKB-UniRule"/>
</dbReference>
<dbReference type="CDD" id="cd00407">
    <property type="entry name" value="Urease_beta"/>
    <property type="match status" value="1"/>
</dbReference>
<dbReference type="FunFam" id="2.10.150.10:FF:000001">
    <property type="entry name" value="Urease subunit beta"/>
    <property type="match status" value="1"/>
</dbReference>
<dbReference type="Gene3D" id="2.10.150.10">
    <property type="entry name" value="Urease, beta subunit"/>
    <property type="match status" value="1"/>
</dbReference>
<dbReference type="HAMAP" id="MF_01954">
    <property type="entry name" value="Urease_beta"/>
    <property type="match status" value="1"/>
</dbReference>
<dbReference type="InterPro" id="IPR002019">
    <property type="entry name" value="Urease_beta-like"/>
</dbReference>
<dbReference type="InterPro" id="IPR036461">
    <property type="entry name" value="Urease_betasu_sf"/>
</dbReference>
<dbReference type="InterPro" id="IPR050069">
    <property type="entry name" value="Urease_subunit"/>
</dbReference>
<dbReference type="NCBIfam" id="NF009682">
    <property type="entry name" value="PRK13203.1"/>
    <property type="match status" value="1"/>
</dbReference>
<dbReference type="NCBIfam" id="TIGR00192">
    <property type="entry name" value="urease_beta"/>
    <property type="match status" value="1"/>
</dbReference>
<dbReference type="PANTHER" id="PTHR33569">
    <property type="entry name" value="UREASE"/>
    <property type="match status" value="1"/>
</dbReference>
<dbReference type="PANTHER" id="PTHR33569:SF1">
    <property type="entry name" value="UREASE"/>
    <property type="match status" value="1"/>
</dbReference>
<dbReference type="Pfam" id="PF00699">
    <property type="entry name" value="Urease_beta"/>
    <property type="match status" value="1"/>
</dbReference>
<dbReference type="SUPFAM" id="SSF51278">
    <property type="entry name" value="Urease, beta-subunit"/>
    <property type="match status" value="1"/>
</dbReference>
<proteinExistence type="inferred from homology"/>
<organism>
    <name type="scientific">Burkholderia pseudomallei (strain 1710b)</name>
    <dbReference type="NCBI Taxonomy" id="320372"/>
    <lineage>
        <taxon>Bacteria</taxon>
        <taxon>Pseudomonadati</taxon>
        <taxon>Pseudomonadota</taxon>
        <taxon>Betaproteobacteria</taxon>
        <taxon>Burkholderiales</taxon>
        <taxon>Burkholderiaceae</taxon>
        <taxon>Burkholderia</taxon>
        <taxon>pseudomallei group</taxon>
    </lineage>
</organism>
<protein>
    <recommendedName>
        <fullName evidence="1">Urease subunit beta</fullName>
        <ecNumber evidence="1">3.5.1.5</ecNumber>
    </recommendedName>
    <alternativeName>
        <fullName evidence="1">Urea amidohydrolase subunit beta</fullName>
    </alternativeName>
</protein>
<comment type="catalytic activity">
    <reaction evidence="1">
        <text>urea + 2 H2O + H(+) = hydrogencarbonate + 2 NH4(+)</text>
        <dbReference type="Rhea" id="RHEA:20557"/>
        <dbReference type="ChEBI" id="CHEBI:15377"/>
        <dbReference type="ChEBI" id="CHEBI:15378"/>
        <dbReference type="ChEBI" id="CHEBI:16199"/>
        <dbReference type="ChEBI" id="CHEBI:17544"/>
        <dbReference type="ChEBI" id="CHEBI:28938"/>
        <dbReference type="EC" id="3.5.1.5"/>
    </reaction>
</comment>
<comment type="pathway">
    <text evidence="1">Nitrogen metabolism; urea degradation; CO(2) and NH(3) from urea (urease route): step 1/1.</text>
</comment>
<comment type="subunit">
    <text evidence="1">Heterotrimer of UreA (gamma), UreB (beta) and UreC (alpha) subunits. Three heterotrimers associate to form the active enzyme.</text>
</comment>
<comment type="subcellular location">
    <subcellularLocation>
        <location evidence="1">Cytoplasm</location>
    </subcellularLocation>
</comment>
<comment type="similarity">
    <text evidence="1">Belongs to the urease beta subunit family.</text>
</comment>
<comment type="sequence caution" evidence="2">
    <conflict type="erroneous initiation">
        <sequence resource="EMBL-CDS" id="ABA49453"/>
    </conflict>
</comment>
<reference key="1">
    <citation type="journal article" date="2010" name="Genome Biol. Evol.">
        <title>Continuing evolution of Burkholderia mallei through genome reduction and large-scale rearrangements.</title>
        <authorList>
            <person name="Losada L."/>
            <person name="Ronning C.M."/>
            <person name="DeShazer D."/>
            <person name="Woods D."/>
            <person name="Fedorova N."/>
            <person name="Kim H.S."/>
            <person name="Shabalina S.A."/>
            <person name="Pearson T.R."/>
            <person name="Brinkac L."/>
            <person name="Tan P."/>
            <person name="Nandi T."/>
            <person name="Crabtree J."/>
            <person name="Badger J."/>
            <person name="Beckstrom-Sternberg S."/>
            <person name="Saqib M."/>
            <person name="Schutzer S.E."/>
            <person name="Keim P."/>
            <person name="Nierman W.C."/>
        </authorList>
    </citation>
    <scope>NUCLEOTIDE SEQUENCE [LARGE SCALE GENOMIC DNA]</scope>
    <source>
        <strain>1710b</strain>
    </source>
</reference>
<name>URE2_BURP1</name>
<accession>Q3JPJ7</accession>
<gene>
    <name evidence="1" type="primary">ureB</name>
    <name type="ordered locus">BURPS1710b_3134</name>
</gene>
<keyword id="KW-0963">Cytoplasm</keyword>
<keyword id="KW-0378">Hydrolase</keyword>
<feature type="chain" id="PRO_0000234242" description="Urease subunit beta">
    <location>
        <begin position="1"/>
        <end position="101"/>
    </location>
</feature>